<sequence>MKKLNLRQLKEHLYHGSLQDLDFSNLTSSAKAWLEREIKRIEEMKFYEKKLYEEGLNFIAGVDEAGRGPLVGPVVAACVILPKEIFIPEINDSKKLPEEKREKLAEVIKKEAISYGIGIVDCREIDEINILNATLKAMKKAIFEVKEKIEYLLVDAISIPDMPIKQLPIVKGDSKSISIAAASILAKVERDRIMREYHKLYPQYNFAKNKGYGTKEHIEALKKYGPCPIHRRTYVEKILKG</sequence>
<comment type="function">
    <text evidence="1">Endonuclease that specifically degrades the RNA of RNA-DNA hybrids.</text>
</comment>
<comment type="catalytic activity">
    <reaction evidence="1">
        <text>Endonucleolytic cleavage to 5'-phosphomonoester.</text>
        <dbReference type="EC" id="3.1.26.4"/>
    </reaction>
</comment>
<comment type="cofactor">
    <cofactor evidence="1">
        <name>Mn(2+)</name>
        <dbReference type="ChEBI" id="CHEBI:29035"/>
    </cofactor>
    <cofactor evidence="1">
        <name>Mg(2+)</name>
        <dbReference type="ChEBI" id="CHEBI:18420"/>
    </cofactor>
    <text evidence="1">Manganese or magnesium. Binds 1 divalent metal ion per monomer in the absence of substrate. May bind a second metal ion after substrate binding.</text>
</comment>
<comment type="subcellular location">
    <subcellularLocation>
        <location evidence="1">Cytoplasm</location>
    </subcellularLocation>
</comment>
<comment type="similarity">
    <text evidence="1">Belongs to the RNase HII family.</text>
</comment>
<proteinExistence type="inferred from homology"/>
<organism>
    <name type="scientific">Caldanaerobacter subterraneus subsp. tengcongensis (strain DSM 15242 / JCM 11007 / NBRC 100824 / MB4)</name>
    <name type="common">Thermoanaerobacter tengcongensis</name>
    <dbReference type="NCBI Taxonomy" id="273068"/>
    <lineage>
        <taxon>Bacteria</taxon>
        <taxon>Bacillati</taxon>
        <taxon>Bacillota</taxon>
        <taxon>Clostridia</taxon>
        <taxon>Thermoanaerobacterales</taxon>
        <taxon>Thermoanaerobacteraceae</taxon>
        <taxon>Caldanaerobacter</taxon>
    </lineage>
</organism>
<dbReference type="EC" id="3.1.26.4" evidence="1"/>
<dbReference type="EMBL" id="AE008691">
    <property type="protein sequence ID" value="AAM24673.1"/>
    <property type="molecule type" value="Genomic_DNA"/>
</dbReference>
<dbReference type="RefSeq" id="WP_011025720.1">
    <property type="nucleotide sequence ID" value="NZ_JANUCV010000001.1"/>
</dbReference>
<dbReference type="SMR" id="Q8R9X9"/>
<dbReference type="STRING" id="273068.TTE1451"/>
<dbReference type="KEGG" id="tte:TTE1451"/>
<dbReference type="eggNOG" id="COG0164">
    <property type="taxonomic scope" value="Bacteria"/>
</dbReference>
<dbReference type="HOGENOM" id="CLU_036532_2_1_9"/>
<dbReference type="OrthoDB" id="9803420at2"/>
<dbReference type="Proteomes" id="UP000000555">
    <property type="component" value="Chromosome"/>
</dbReference>
<dbReference type="GO" id="GO:0005737">
    <property type="term" value="C:cytoplasm"/>
    <property type="evidence" value="ECO:0007669"/>
    <property type="project" value="UniProtKB-SubCell"/>
</dbReference>
<dbReference type="GO" id="GO:0032299">
    <property type="term" value="C:ribonuclease H2 complex"/>
    <property type="evidence" value="ECO:0007669"/>
    <property type="project" value="TreeGrafter"/>
</dbReference>
<dbReference type="GO" id="GO:0030145">
    <property type="term" value="F:manganese ion binding"/>
    <property type="evidence" value="ECO:0007669"/>
    <property type="project" value="UniProtKB-UniRule"/>
</dbReference>
<dbReference type="GO" id="GO:0003723">
    <property type="term" value="F:RNA binding"/>
    <property type="evidence" value="ECO:0007669"/>
    <property type="project" value="InterPro"/>
</dbReference>
<dbReference type="GO" id="GO:0004523">
    <property type="term" value="F:RNA-DNA hybrid ribonuclease activity"/>
    <property type="evidence" value="ECO:0007669"/>
    <property type="project" value="UniProtKB-UniRule"/>
</dbReference>
<dbReference type="GO" id="GO:0043137">
    <property type="term" value="P:DNA replication, removal of RNA primer"/>
    <property type="evidence" value="ECO:0007669"/>
    <property type="project" value="TreeGrafter"/>
</dbReference>
<dbReference type="GO" id="GO:0006298">
    <property type="term" value="P:mismatch repair"/>
    <property type="evidence" value="ECO:0007669"/>
    <property type="project" value="TreeGrafter"/>
</dbReference>
<dbReference type="CDD" id="cd07182">
    <property type="entry name" value="RNase_HII_bacteria_HII_like"/>
    <property type="match status" value="1"/>
</dbReference>
<dbReference type="FunFam" id="3.30.420.10:FF:000006">
    <property type="entry name" value="Ribonuclease HII"/>
    <property type="match status" value="1"/>
</dbReference>
<dbReference type="Gene3D" id="3.30.420.10">
    <property type="entry name" value="Ribonuclease H-like superfamily/Ribonuclease H"/>
    <property type="match status" value="1"/>
</dbReference>
<dbReference type="HAMAP" id="MF_00052_B">
    <property type="entry name" value="RNase_HII_B"/>
    <property type="match status" value="1"/>
</dbReference>
<dbReference type="InterPro" id="IPR022898">
    <property type="entry name" value="RNase_HII"/>
</dbReference>
<dbReference type="InterPro" id="IPR001352">
    <property type="entry name" value="RNase_HII/HIII"/>
</dbReference>
<dbReference type="InterPro" id="IPR024567">
    <property type="entry name" value="RNase_HII/HIII_dom"/>
</dbReference>
<dbReference type="InterPro" id="IPR012337">
    <property type="entry name" value="RNaseH-like_sf"/>
</dbReference>
<dbReference type="InterPro" id="IPR036397">
    <property type="entry name" value="RNaseH_sf"/>
</dbReference>
<dbReference type="NCBIfam" id="NF000594">
    <property type="entry name" value="PRK00015.1-1"/>
    <property type="match status" value="1"/>
</dbReference>
<dbReference type="NCBIfam" id="NF000595">
    <property type="entry name" value="PRK00015.1-3"/>
    <property type="match status" value="1"/>
</dbReference>
<dbReference type="PANTHER" id="PTHR10954">
    <property type="entry name" value="RIBONUCLEASE H2 SUBUNIT A"/>
    <property type="match status" value="1"/>
</dbReference>
<dbReference type="PANTHER" id="PTHR10954:SF18">
    <property type="entry name" value="RIBONUCLEASE HII"/>
    <property type="match status" value="1"/>
</dbReference>
<dbReference type="Pfam" id="PF01351">
    <property type="entry name" value="RNase_HII"/>
    <property type="match status" value="1"/>
</dbReference>
<dbReference type="SUPFAM" id="SSF53098">
    <property type="entry name" value="Ribonuclease H-like"/>
    <property type="match status" value="1"/>
</dbReference>
<dbReference type="PROSITE" id="PS51975">
    <property type="entry name" value="RNASE_H_2"/>
    <property type="match status" value="1"/>
</dbReference>
<accession>Q8R9X9</accession>
<feature type="chain" id="PRO_0000111646" description="Ribonuclease HII">
    <location>
        <begin position="1"/>
        <end position="241"/>
    </location>
</feature>
<feature type="domain" description="RNase H type-2" evidence="2">
    <location>
        <begin position="57"/>
        <end position="241"/>
    </location>
</feature>
<feature type="binding site" evidence="1">
    <location>
        <position position="63"/>
    </location>
    <ligand>
        <name>a divalent metal cation</name>
        <dbReference type="ChEBI" id="CHEBI:60240"/>
    </ligand>
</feature>
<feature type="binding site" evidence="1">
    <location>
        <position position="64"/>
    </location>
    <ligand>
        <name>a divalent metal cation</name>
        <dbReference type="ChEBI" id="CHEBI:60240"/>
    </ligand>
</feature>
<feature type="binding site" evidence="1">
    <location>
        <position position="155"/>
    </location>
    <ligand>
        <name>a divalent metal cation</name>
        <dbReference type="ChEBI" id="CHEBI:60240"/>
    </ligand>
</feature>
<evidence type="ECO:0000255" key="1">
    <source>
        <dbReference type="HAMAP-Rule" id="MF_00052"/>
    </source>
</evidence>
<evidence type="ECO:0000255" key="2">
    <source>
        <dbReference type="PROSITE-ProRule" id="PRU01319"/>
    </source>
</evidence>
<name>RNH2_CALS4</name>
<keyword id="KW-0963">Cytoplasm</keyword>
<keyword id="KW-0255">Endonuclease</keyword>
<keyword id="KW-0378">Hydrolase</keyword>
<keyword id="KW-0464">Manganese</keyword>
<keyword id="KW-0479">Metal-binding</keyword>
<keyword id="KW-0540">Nuclease</keyword>
<keyword id="KW-1185">Reference proteome</keyword>
<gene>
    <name evidence="1" type="primary">rnhB</name>
    <name type="ordered locus">TTE1451</name>
</gene>
<protein>
    <recommendedName>
        <fullName evidence="1">Ribonuclease HII</fullName>
        <shortName evidence="1">RNase HII</shortName>
        <ecNumber evidence="1">3.1.26.4</ecNumber>
    </recommendedName>
</protein>
<reference key="1">
    <citation type="journal article" date="2002" name="Genome Res.">
        <title>A complete sequence of the T. tengcongensis genome.</title>
        <authorList>
            <person name="Bao Q."/>
            <person name="Tian Y."/>
            <person name="Li W."/>
            <person name="Xu Z."/>
            <person name="Xuan Z."/>
            <person name="Hu S."/>
            <person name="Dong W."/>
            <person name="Yang J."/>
            <person name="Chen Y."/>
            <person name="Xue Y."/>
            <person name="Xu Y."/>
            <person name="Lai X."/>
            <person name="Huang L."/>
            <person name="Dong X."/>
            <person name="Ma Y."/>
            <person name="Ling L."/>
            <person name="Tan H."/>
            <person name="Chen R."/>
            <person name="Wang J."/>
            <person name="Yu J."/>
            <person name="Yang H."/>
        </authorList>
    </citation>
    <scope>NUCLEOTIDE SEQUENCE [LARGE SCALE GENOMIC DNA]</scope>
    <source>
        <strain>DSM 15242 / JCM 11007 / NBRC 100824 / MB4</strain>
    </source>
</reference>